<comment type="interaction">
    <interactant intactId="EBI-10293349">
        <id>Q96SE0</id>
    </interactant>
    <interactant intactId="EBI-749265">
        <id>Q8N6L0</id>
        <label>KASH5</label>
    </interactant>
    <organismsDiffer>false</organismsDiffer>
    <experiments>3</experiments>
</comment>
<comment type="subcellular location">
    <subcellularLocation>
        <location evidence="6">Membrane</location>
        <topology evidence="6">Single-pass type II membrane protein</topology>
    </subcellularLocation>
</comment>
<comment type="alternative products">
    <event type="alternative splicing"/>
    <isoform>
        <id>Q96SE0-1</id>
        <name>1</name>
        <sequence type="displayed"/>
    </isoform>
    <isoform>
        <id>Q96SE0-3</id>
        <name>2</name>
        <sequence type="described" ref="VSP_054269 VSP_054270"/>
    </isoform>
</comment>
<comment type="tissue specificity">
    <text evidence="3">Ubiquitously expressed.</text>
</comment>
<comment type="similarity">
    <text evidence="6">Belongs to the AB hydrolase superfamily. AB hydrolase 4 family.</text>
</comment>
<reference key="1">
    <citation type="journal article" date="2003" name="BMC Genomics">
        <title>The gene structure and expression of human ABHD1: overlapping polyadenylation signal sequence with Sec12.</title>
        <authorList>
            <person name="Edgar A.J."/>
        </authorList>
    </citation>
    <scope>NUCLEOTIDE SEQUENCE [MRNA] (ISOFORM 1)</scope>
    <scope>TISSUE SPECIFICITY</scope>
    <source>
        <tissue>Lung</tissue>
    </source>
</reference>
<reference key="2">
    <citation type="journal article" date="2004" name="Nat. Genet.">
        <title>Complete sequencing and characterization of 21,243 full-length human cDNAs.</title>
        <authorList>
            <person name="Ota T."/>
            <person name="Suzuki Y."/>
            <person name="Nishikawa T."/>
            <person name="Otsuki T."/>
            <person name="Sugiyama T."/>
            <person name="Irie R."/>
            <person name="Wakamatsu A."/>
            <person name="Hayashi K."/>
            <person name="Sato H."/>
            <person name="Nagai K."/>
            <person name="Kimura K."/>
            <person name="Makita H."/>
            <person name="Sekine M."/>
            <person name="Obayashi M."/>
            <person name="Nishi T."/>
            <person name="Shibahara T."/>
            <person name="Tanaka T."/>
            <person name="Ishii S."/>
            <person name="Yamamoto J."/>
            <person name="Saito K."/>
            <person name="Kawai Y."/>
            <person name="Isono Y."/>
            <person name="Nakamura Y."/>
            <person name="Nagahari K."/>
            <person name="Murakami K."/>
            <person name="Yasuda T."/>
            <person name="Iwayanagi T."/>
            <person name="Wagatsuma M."/>
            <person name="Shiratori A."/>
            <person name="Sudo H."/>
            <person name="Hosoiri T."/>
            <person name="Kaku Y."/>
            <person name="Kodaira H."/>
            <person name="Kondo H."/>
            <person name="Sugawara M."/>
            <person name="Takahashi M."/>
            <person name="Kanda K."/>
            <person name="Yokoi T."/>
            <person name="Furuya T."/>
            <person name="Kikkawa E."/>
            <person name="Omura Y."/>
            <person name="Abe K."/>
            <person name="Kamihara K."/>
            <person name="Katsuta N."/>
            <person name="Sato K."/>
            <person name="Tanikawa M."/>
            <person name="Yamazaki M."/>
            <person name="Ninomiya K."/>
            <person name="Ishibashi T."/>
            <person name="Yamashita H."/>
            <person name="Murakawa K."/>
            <person name="Fujimori K."/>
            <person name="Tanai H."/>
            <person name="Kimata M."/>
            <person name="Watanabe M."/>
            <person name="Hiraoka S."/>
            <person name="Chiba Y."/>
            <person name="Ishida S."/>
            <person name="Ono Y."/>
            <person name="Takiguchi S."/>
            <person name="Watanabe S."/>
            <person name="Yosida M."/>
            <person name="Hotuta T."/>
            <person name="Kusano J."/>
            <person name="Kanehori K."/>
            <person name="Takahashi-Fujii A."/>
            <person name="Hara H."/>
            <person name="Tanase T.-O."/>
            <person name="Nomura Y."/>
            <person name="Togiya S."/>
            <person name="Komai F."/>
            <person name="Hara R."/>
            <person name="Takeuchi K."/>
            <person name="Arita M."/>
            <person name="Imose N."/>
            <person name="Musashino K."/>
            <person name="Yuuki H."/>
            <person name="Oshima A."/>
            <person name="Sasaki N."/>
            <person name="Aotsuka S."/>
            <person name="Yoshikawa Y."/>
            <person name="Matsunawa H."/>
            <person name="Ichihara T."/>
            <person name="Shiohata N."/>
            <person name="Sano S."/>
            <person name="Moriya S."/>
            <person name="Momiyama H."/>
            <person name="Satoh N."/>
            <person name="Takami S."/>
            <person name="Terashima Y."/>
            <person name="Suzuki O."/>
            <person name="Nakagawa S."/>
            <person name="Senoh A."/>
            <person name="Mizoguchi H."/>
            <person name="Goto Y."/>
            <person name="Shimizu F."/>
            <person name="Wakebe H."/>
            <person name="Hishigaki H."/>
            <person name="Watanabe T."/>
            <person name="Sugiyama A."/>
            <person name="Takemoto M."/>
            <person name="Kawakami B."/>
            <person name="Yamazaki M."/>
            <person name="Watanabe K."/>
            <person name="Kumagai A."/>
            <person name="Itakura S."/>
            <person name="Fukuzumi Y."/>
            <person name="Fujimori Y."/>
            <person name="Komiyama M."/>
            <person name="Tashiro H."/>
            <person name="Tanigami A."/>
            <person name="Fujiwara T."/>
            <person name="Ono T."/>
            <person name="Yamada K."/>
            <person name="Fujii Y."/>
            <person name="Ozaki K."/>
            <person name="Hirao M."/>
            <person name="Ohmori Y."/>
            <person name="Kawabata A."/>
            <person name="Hikiji T."/>
            <person name="Kobatake N."/>
            <person name="Inagaki H."/>
            <person name="Ikema Y."/>
            <person name="Okamoto S."/>
            <person name="Okitani R."/>
            <person name="Kawakami T."/>
            <person name="Noguchi S."/>
            <person name="Itoh T."/>
            <person name="Shigeta K."/>
            <person name="Senba T."/>
            <person name="Matsumura K."/>
            <person name="Nakajima Y."/>
            <person name="Mizuno T."/>
            <person name="Morinaga M."/>
            <person name="Sasaki M."/>
            <person name="Togashi T."/>
            <person name="Oyama M."/>
            <person name="Hata H."/>
            <person name="Watanabe M."/>
            <person name="Komatsu T."/>
            <person name="Mizushima-Sugano J."/>
            <person name="Satoh T."/>
            <person name="Shirai Y."/>
            <person name="Takahashi Y."/>
            <person name="Nakagawa K."/>
            <person name="Okumura K."/>
            <person name="Nagase T."/>
            <person name="Nomura N."/>
            <person name="Kikuchi H."/>
            <person name="Masuho Y."/>
            <person name="Yamashita R."/>
            <person name="Nakai K."/>
            <person name="Yada T."/>
            <person name="Nakamura Y."/>
            <person name="Ohara O."/>
            <person name="Isogai T."/>
            <person name="Sugano S."/>
        </authorList>
    </citation>
    <scope>NUCLEOTIDE SEQUENCE [LARGE SCALE MRNA] (ISOFORM 2)</scope>
    <source>
        <tissue>Testis</tissue>
    </source>
</reference>
<reference key="3">
    <citation type="journal article" date="2005" name="Nature">
        <title>Generation and annotation of the DNA sequences of human chromosomes 2 and 4.</title>
        <authorList>
            <person name="Hillier L.W."/>
            <person name="Graves T.A."/>
            <person name="Fulton R.S."/>
            <person name="Fulton L.A."/>
            <person name="Pepin K.H."/>
            <person name="Minx P."/>
            <person name="Wagner-McPherson C."/>
            <person name="Layman D."/>
            <person name="Wylie K."/>
            <person name="Sekhon M."/>
            <person name="Becker M.C."/>
            <person name="Fewell G.A."/>
            <person name="Delehaunty K.D."/>
            <person name="Miner T.L."/>
            <person name="Nash W.E."/>
            <person name="Kremitzki C."/>
            <person name="Oddy L."/>
            <person name="Du H."/>
            <person name="Sun H."/>
            <person name="Bradshaw-Cordum H."/>
            <person name="Ali J."/>
            <person name="Carter J."/>
            <person name="Cordes M."/>
            <person name="Harris A."/>
            <person name="Isak A."/>
            <person name="van Brunt A."/>
            <person name="Nguyen C."/>
            <person name="Du F."/>
            <person name="Courtney L."/>
            <person name="Kalicki J."/>
            <person name="Ozersky P."/>
            <person name="Abbott S."/>
            <person name="Armstrong J."/>
            <person name="Belter E.A."/>
            <person name="Caruso L."/>
            <person name="Cedroni M."/>
            <person name="Cotton M."/>
            <person name="Davidson T."/>
            <person name="Desai A."/>
            <person name="Elliott G."/>
            <person name="Erb T."/>
            <person name="Fronick C."/>
            <person name="Gaige T."/>
            <person name="Haakenson W."/>
            <person name="Haglund K."/>
            <person name="Holmes A."/>
            <person name="Harkins R."/>
            <person name="Kim K."/>
            <person name="Kruchowski S.S."/>
            <person name="Strong C.M."/>
            <person name="Grewal N."/>
            <person name="Goyea E."/>
            <person name="Hou S."/>
            <person name="Levy A."/>
            <person name="Martinka S."/>
            <person name="Mead K."/>
            <person name="McLellan M.D."/>
            <person name="Meyer R."/>
            <person name="Randall-Maher J."/>
            <person name="Tomlinson C."/>
            <person name="Dauphin-Kohlberg S."/>
            <person name="Kozlowicz-Reilly A."/>
            <person name="Shah N."/>
            <person name="Swearengen-Shahid S."/>
            <person name="Snider J."/>
            <person name="Strong J.T."/>
            <person name="Thompson J."/>
            <person name="Yoakum M."/>
            <person name="Leonard S."/>
            <person name="Pearman C."/>
            <person name="Trani L."/>
            <person name="Radionenko M."/>
            <person name="Waligorski J.E."/>
            <person name="Wang C."/>
            <person name="Rock S.M."/>
            <person name="Tin-Wollam A.-M."/>
            <person name="Maupin R."/>
            <person name="Latreille P."/>
            <person name="Wendl M.C."/>
            <person name="Yang S.-P."/>
            <person name="Pohl C."/>
            <person name="Wallis J.W."/>
            <person name="Spieth J."/>
            <person name="Bieri T.A."/>
            <person name="Berkowicz N."/>
            <person name="Nelson J.O."/>
            <person name="Osborne J."/>
            <person name="Ding L."/>
            <person name="Meyer R."/>
            <person name="Sabo A."/>
            <person name="Shotland Y."/>
            <person name="Sinha P."/>
            <person name="Wohldmann P.E."/>
            <person name="Cook L.L."/>
            <person name="Hickenbotham M.T."/>
            <person name="Eldred J."/>
            <person name="Williams D."/>
            <person name="Jones T.A."/>
            <person name="She X."/>
            <person name="Ciccarelli F.D."/>
            <person name="Izaurralde E."/>
            <person name="Taylor J."/>
            <person name="Schmutz J."/>
            <person name="Myers R.M."/>
            <person name="Cox D.R."/>
            <person name="Huang X."/>
            <person name="McPherson J.D."/>
            <person name="Mardis E.R."/>
            <person name="Clifton S.W."/>
            <person name="Warren W.C."/>
            <person name="Chinwalla A.T."/>
            <person name="Eddy S.R."/>
            <person name="Marra M.A."/>
            <person name="Ovcharenko I."/>
            <person name="Furey T.S."/>
            <person name="Miller W."/>
            <person name="Eichler E.E."/>
            <person name="Bork P."/>
            <person name="Suyama M."/>
            <person name="Torrents D."/>
            <person name="Waterston R.H."/>
            <person name="Wilson R.K."/>
        </authorList>
    </citation>
    <scope>NUCLEOTIDE SEQUENCE [LARGE SCALE GENOMIC DNA]</scope>
    <scope>VARIANT ASP-137</scope>
</reference>
<reference key="4">
    <citation type="submission" date="2005-09" db="EMBL/GenBank/DDBJ databases">
        <authorList>
            <person name="Mural R.J."/>
            <person name="Istrail S."/>
            <person name="Sutton G."/>
            <person name="Florea L."/>
            <person name="Halpern A.L."/>
            <person name="Mobarry C.M."/>
            <person name="Lippert R."/>
            <person name="Walenz B."/>
            <person name="Shatkay H."/>
            <person name="Dew I."/>
            <person name="Miller J.R."/>
            <person name="Flanigan M.J."/>
            <person name="Edwards N.J."/>
            <person name="Bolanos R."/>
            <person name="Fasulo D."/>
            <person name="Halldorsson B.V."/>
            <person name="Hannenhalli S."/>
            <person name="Turner R."/>
            <person name="Yooseph S."/>
            <person name="Lu F."/>
            <person name="Nusskern D.R."/>
            <person name="Shue B.C."/>
            <person name="Zheng X.H."/>
            <person name="Zhong F."/>
            <person name="Delcher A.L."/>
            <person name="Huson D.H."/>
            <person name="Kravitz S.A."/>
            <person name="Mouchard L."/>
            <person name="Reinert K."/>
            <person name="Remington K.A."/>
            <person name="Clark A.G."/>
            <person name="Waterman M.S."/>
            <person name="Eichler E.E."/>
            <person name="Adams M.D."/>
            <person name="Hunkapiller M.W."/>
            <person name="Myers E.W."/>
            <person name="Venter J.C."/>
        </authorList>
    </citation>
    <scope>NUCLEOTIDE SEQUENCE [LARGE SCALE GENOMIC DNA]</scope>
</reference>
<reference key="5">
    <citation type="journal article" date="2004" name="Genome Res.">
        <title>The status, quality, and expansion of the NIH full-length cDNA project: the Mammalian Gene Collection (MGC).</title>
        <authorList>
            <consortium name="The MGC Project Team"/>
        </authorList>
    </citation>
    <scope>NUCLEOTIDE SEQUENCE [LARGE SCALE MRNA] (ISOFORM 1)</scope>
    <source>
        <tissue>Brain</tissue>
    </source>
</reference>
<sequence length="405" mass="45221">MLSSFLSPQNGTWADTFSLLLALAVALYLGYYWACVLQRPRLVAGPQFLAFLEPHCSITTETFYPTLWCFEGRLQSIFQVLLQSQPLVLYQSDILQTPDGGQLLLDWAKQPDSSQDPDPTTQPIVLLLPGITGSSQETYVLHLVNQALRDGYQAVVFNNRGCRGEELRTHRAFCASNTEDLETVVNHIKHRYPQAPLLAVGISFGGILVLNHLAQARQAAGLVAALTLSACWDSFETTRSLETPLNSLLFNQPLTAGLCQLVERNRKVIEKVVDIDFVLQARTIRQFDERYTSVAFGYQDCVTYYKAASPRTKIDAIRIPVLYLSAADDPFSPVCALPIQAAQHSPYVALLITARGGHIGFLEGLLPWQHWYMSRLLHQYAKAIFQDPEGLPDLRALLPSEDRNS</sequence>
<name>ABHD1_HUMAN</name>
<keyword id="KW-0025">Alternative splicing</keyword>
<keyword id="KW-0325">Glycoprotein</keyword>
<keyword id="KW-0378">Hydrolase</keyword>
<keyword id="KW-0472">Membrane</keyword>
<keyword id="KW-1267">Proteomics identification</keyword>
<keyword id="KW-1185">Reference proteome</keyword>
<keyword id="KW-0719">Serine esterase</keyword>
<keyword id="KW-0735">Signal-anchor</keyword>
<keyword id="KW-0812">Transmembrane</keyword>
<keyword id="KW-1133">Transmembrane helix</keyword>
<feature type="chain" id="PRO_0000280204" description="Protein ABHD1">
    <location>
        <begin position="1"/>
        <end position="405"/>
    </location>
</feature>
<feature type="transmembrane region" description="Helical; Signal-anchor for type II membrane protein" evidence="2">
    <location>
        <begin position="17"/>
        <end position="37"/>
    </location>
</feature>
<feature type="domain" description="AB hydrolase-1" evidence="2">
    <location>
        <begin position="123"/>
        <end position="364"/>
    </location>
</feature>
<feature type="active site" description="Charge relay system" evidence="1">
    <location>
        <position position="203"/>
    </location>
</feature>
<feature type="active site" description="Charge relay system" evidence="1">
    <location>
        <position position="329"/>
    </location>
</feature>
<feature type="active site" description="Charge relay system" evidence="1">
    <location>
        <position position="358"/>
    </location>
</feature>
<feature type="glycosylation site" description="N-linked (GlcNAc...) asparagine" evidence="2">
    <location>
        <position position="10"/>
    </location>
</feature>
<feature type="splice variant" id="VSP_054269" description="In isoform 2." evidence="5">
    <original>NRKVIEKVVDIDFVLQARTIRQFDERYTSVAFGYQDCVTYY</original>
    <variation>LSYGKTCRPVQSASLMSATHLWPLDIKTVLPTTKQQALEPR</variation>
    <location>
        <begin position="265"/>
        <end position="305"/>
    </location>
</feature>
<feature type="splice variant" id="VSP_054270" description="In isoform 2." evidence="5">
    <location>
        <begin position="306"/>
        <end position="405"/>
    </location>
</feature>
<feature type="sequence variant" id="VAR_052484" description="In dbSNP:rs34127901.">
    <original>P</original>
    <variation>Q</variation>
    <location>
        <position position="54"/>
    </location>
</feature>
<feature type="sequence variant" id="VAR_031087" description="In dbSNP:rs6715286." evidence="4">
    <original>E</original>
    <variation>D</variation>
    <location>
        <position position="137"/>
    </location>
</feature>
<feature type="sequence variant" id="VAR_031088" description="In dbSNP:rs2304678.">
    <original>W</original>
    <variation>C</variation>
    <location>
        <position position="371"/>
    </location>
</feature>
<organism>
    <name type="scientific">Homo sapiens</name>
    <name type="common">Human</name>
    <dbReference type="NCBI Taxonomy" id="9606"/>
    <lineage>
        <taxon>Eukaryota</taxon>
        <taxon>Metazoa</taxon>
        <taxon>Chordata</taxon>
        <taxon>Craniata</taxon>
        <taxon>Vertebrata</taxon>
        <taxon>Euteleostomi</taxon>
        <taxon>Mammalia</taxon>
        <taxon>Eutheria</taxon>
        <taxon>Euarchontoglires</taxon>
        <taxon>Primates</taxon>
        <taxon>Haplorrhini</taxon>
        <taxon>Catarrhini</taxon>
        <taxon>Hominidae</taxon>
        <taxon>Homo</taxon>
    </lineage>
</organism>
<accession>Q96SE0</accession>
<accession>B3KSF6</accession>
<accession>E9PDR9</accession>
<accession>Q05BY3</accession>
<accession>Q53SZ1</accession>
<accession>Q8IXQ7</accession>
<protein>
    <recommendedName>
        <fullName evidence="6">Protein ABHD1</fullName>
        <ecNumber>3.1.1.-</ecNumber>
    </recommendedName>
    <alternativeName>
        <fullName evidence="6">Alpha/beta hydrolase domain-containing protein 1</fullName>
        <shortName evidence="7">Abhydrolase domain-containing protein 1</shortName>
    </alternativeName>
    <alternativeName>
        <fullName>Lung alpha/beta hydrolase 1</fullName>
    </alternativeName>
</protein>
<gene>
    <name evidence="7" type="primary">ABHD1</name>
    <name type="synonym">LABH1</name>
</gene>
<dbReference type="EC" id="3.1.1.-"/>
<dbReference type="EMBL" id="AY033290">
    <property type="protein sequence ID" value="AAK44222.1"/>
    <property type="molecule type" value="mRNA"/>
</dbReference>
<dbReference type="EMBL" id="AK093447">
    <property type="protein sequence ID" value="BAG52718.1"/>
    <property type="molecule type" value="mRNA"/>
</dbReference>
<dbReference type="EMBL" id="AC013403">
    <property type="protein sequence ID" value="AAX93169.1"/>
    <property type="molecule type" value="Genomic_DNA"/>
</dbReference>
<dbReference type="EMBL" id="CH471053">
    <property type="protein sequence ID" value="EAX00633.1"/>
    <property type="molecule type" value="Genomic_DNA"/>
</dbReference>
<dbReference type="EMBL" id="BC039576">
    <property type="protein sequence ID" value="AAH39576.2"/>
    <property type="molecule type" value="mRNA"/>
</dbReference>
<dbReference type="CCDS" id="CCDS1736.1">
    <molecule id="Q96SE0-1"/>
</dbReference>
<dbReference type="RefSeq" id="NP_115993.3">
    <molecule id="Q96SE0-1"/>
    <property type="nucleotide sequence ID" value="NM_032604.3"/>
</dbReference>
<dbReference type="RefSeq" id="XP_011531438.1">
    <molecule id="Q96SE0-3"/>
    <property type="nucleotide sequence ID" value="XM_011533136.4"/>
</dbReference>
<dbReference type="RefSeq" id="XP_054200199.1">
    <molecule id="Q96SE0-3"/>
    <property type="nucleotide sequence ID" value="XM_054344224.1"/>
</dbReference>
<dbReference type="BioGRID" id="124211">
    <property type="interactions" value="1"/>
</dbReference>
<dbReference type="FunCoup" id="Q96SE0">
    <property type="interactions" value="145"/>
</dbReference>
<dbReference type="IntAct" id="Q96SE0">
    <property type="interactions" value="1"/>
</dbReference>
<dbReference type="STRING" id="9606.ENSP00000326491"/>
<dbReference type="ESTHER" id="human-ABHD1">
    <property type="family name" value="abh_upf0017"/>
</dbReference>
<dbReference type="GlyCosmos" id="Q96SE0">
    <property type="glycosylation" value="1 site, No reported glycans"/>
</dbReference>
<dbReference type="GlyGen" id="Q96SE0">
    <property type="glycosylation" value="1 site"/>
</dbReference>
<dbReference type="iPTMnet" id="Q96SE0"/>
<dbReference type="PhosphoSitePlus" id="Q96SE0"/>
<dbReference type="BioMuta" id="ABHD1"/>
<dbReference type="DMDM" id="308153404"/>
<dbReference type="jPOST" id="Q96SE0"/>
<dbReference type="MassIVE" id="Q96SE0"/>
<dbReference type="PaxDb" id="9606-ENSP00000326491"/>
<dbReference type="PeptideAtlas" id="Q96SE0"/>
<dbReference type="Antibodypedia" id="28175">
    <property type="antibodies" value="131 antibodies from 28 providers"/>
</dbReference>
<dbReference type="DNASU" id="84696"/>
<dbReference type="Ensembl" id="ENST00000316470.9">
    <molecule id="Q96SE0-1"/>
    <property type="protein sequence ID" value="ENSP00000326491.4"/>
    <property type="gene ID" value="ENSG00000143994.14"/>
</dbReference>
<dbReference type="Ensembl" id="ENST00000448950.5">
    <molecule id="Q96SE0-3"/>
    <property type="protein sequence ID" value="ENSP00000410756.1"/>
    <property type="gene ID" value="ENSG00000143994.14"/>
</dbReference>
<dbReference type="Ensembl" id="ENST00000621324.4">
    <molecule id="Q96SE0-3"/>
    <property type="protein sequence ID" value="ENSP00000481238.1"/>
    <property type="gene ID" value="ENSG00000143994.14"/>
</dbReference>
<dbReference type="GeneID" id="84696"/>
<dbReference type="KEGG" id="hsa:84696"/>
<dbReference type="MANE-Select" id="ENST00000316470.9">
    <property type="protein sequence ID" value="ENSP00000326491.4"/>
    <property type="RefSeq nucleotide sequence ID" value="NM_032604.4"/>
    <property type="RefSeq protein sequence ID" value="NP_115993.3"/>
</dbReference>
<dbReference type="UCSC" id="uc002rit.4">
    <molecule id="Q96SE0-1"/>
    <property type="organism name" value="human"/>
</dbReference>
<dbReference type="AGR" id="HGNC:17553"/>
<dbReference type="CTD" id="84696"/>
<dbReference type="DisGeNET" id="84696"/>
<dbReference type="GeneCards" id="ABHD1"/>
<dbReference type="HGNC" id="HGNC:17553">
    <property type="gene designation" value="ABHD1"/>
</dbReference>
<dbReference type="HPA" id="ENSG00000143994">
    <property type="expression patterns" value="Tissue enriched (testis)"/>
</dbReference>
<dbReference type="MIM" id="612195">
    <property type="type" value="gene"/>
</dbReference>
<dbReference type="neXtProt" id="NX_Q96SE0"/>
<dbReference type="OpenTargets" id="ENSG00000143994"/>
<dbReference type="PharmGKB" id="PA38459"/>
<dbReference type="VEuPathDB" id="HostDB:ENSG00000143994"/>
<dbReference type="eggNOG" id="KOG1838">
    <property type="taxonomic scope" value="Eukaryota"/>
</dbReference>
<dbReference type="GeneTree" id="ENSGT00950000182902"/>
<dbReference type="HOGENOM" id="CLU_912033_0_0_1"/>
<dbReference type="InParanoid" id="Q96SE0"/>
<dbReference type="OMA" id="MMTTSWG"/>
<dbReference type="OrthoDB" id="247542at2759"/>
<dbReference type="PAN-GO" id="Q96SE0">
    <property type="GO annotations" value="4 GO annotations based on evolutionary models"/>
</dbReference>
<dbReference type="PhylomeDB" id="Q96SE0"/>
<dbReference type="TreeFam" id="TF313195"/>
<dbReference type="PathwayCommons" id="Q96SE0"/>
<dbReference type="SignaLink" id="Q96SE0"/>
<dbReference type="BioGRID-ORCS" id="84696">
    <property type="hits" value="14 hits in 1143 CRISPR screens"/>
</dbReference>
<dbReference type="ChiTaRS" id="ABHD1">
    <property type="organism name" value="human"/>
</dbReference>
<dbReference type="GenomeRNAi" id="84696"/>
<dbReference type="Pharos" id="Q96SE0">
    <property type="development level" value="Tdark"/>
</dbReference>
<dbReference type="PRO" id="PR:Q96SE0"/>
<dbReference type="Proteomes" id="UP000005640">
    <property type="component" value="Chromosome 2"/>
</dbReference>
<dbReference type="RNAct" id="Q96SE0">
    <property type="molecule type" value="protein"/>
</dbReference>
<dbReference type="Bgee" id="ENSG00000143994">
    <property type="expression patterns" value="Expressed in left testis and 102 other cell types or tissues"/>
</dbReference>
<dbReference type="ExpressionAtlas" id="Q96SE0">
    <property type="expression patterns" value="baseline and differential"/>
</dbReference>
<dbReference type="GO" id="GO:0016020">
    <property type="term" value="C:membrane"/>
    <property type="evidence" value="ECO:0000303"/>
    <property type="project" value="UniProtKB"/>
</dbReference>
<dbReference type="GO" id="GO:0008126">
    <property type="term" value="F:acetylesterase activity"/>
    <property type="evidence" value="ECO:0000318"/>
    <property type="project" value="GO_Central"/>
</dbReference>
<dbReference type="GO" id="GO:0047372">
    <property type="term" value="F:monoacylglycerol lipase activity"/>
    <property type="evidence" value="ECO:0000318"/>
    <property type="project" value="GO_Central"/>
</dbReference>
<dbReference type="GO" id="GO:0051792">
    <property type="term" value="P:medium-chain fatty acid biosynthetic process"/>
    <property type="evidence" value="ECO:0000318"/>
    <property type="project" value="GO_Central"/>
</dbReference>
<dbReference type="GO" id="GO:0051793">
    <property type="term" value="P:medium-chain fatty acid catabolic process"/>
    <property type="evidence" value="ECO:0000318"/>
    <property type="project" value="GO_Central"/>
</dbReference>
<dbReference type="FunFam" id="3.40.50.1820:FF:000167">
    <property type="entry name" value="Abhydrolase domain containing 1"/>
    <property type="match status" value="1"/>
</dbReference>
<dbReference type="Gene3D" id="3.40.50.1820">
    <property type="entry name" value="alpha/beta hydrolase"/>
    <property type="match status" value="1"/>
</dbReference>
<dbReference type="InterPro" id="IPR000073">
    <property type="entry name" value="AB_hydrolase_1"/>
</dbReference>
<dbReference type="InterPro" id="IPR000952">
    <property type="entry name" value="AB_hydrolase_4_CS"/>
</dbReference>
<dbReference type="InterPro" id="IPR050960">
    <property type="entry name" value="AB_hydrolase_4_sf"/>
</dbReference>
<dbReference type="InterPro" id="IPR029058">
    <property type="entry name" value="AB_hydrolase_fold"/>
</dbReference>
<dbReference type="InterPro" id="IPR012020">
    <property type="entry name" value="ABHD4"/>
</dbReference>
<dbReference type="PANTHER" id="PTHR10794">
    <property type="entry name" value="ABHYDROLASE DOMAIN-CONTAINING PROTEIN"/>
    <property type="match status" value="1"/>
</dbReference>
<dbReference type="PANTHER" id="PTHR10794:SF60">
    <property type="entry name" value="PROTEIN ABHD1"/>
    <property type="match status" value="1"/>
</dbReference>
<dbReference type="Pfam" id="PF00561">
    <property type="entry name" value="Abhydrolase_1"/>
    <property type="match status" value="1"/>
</dbReference>
<dbReference type="PIRSF" id="PIRSF005211">
    <property type="entry name" value="Ab_hydro_YheT"/>
    <property type="match status" value="1"/>
</dbReference>
<dbReference type="SUPFAM" id="SSF53474">
    <property type="entry name" value="alpha/beta-Hydrolases"/>
    <property type="match status" value="1"/>
</dbReference>
<dbReference type="PROSITE" id="PS01133">
    <property type="entry name" value="UPF0017"/>
    <property type="match status" value="1"/>
</dbReference>
<proteinExistence type="evidence at protein level"/>
<evidence type="ECO:0000250" key="1"/>
<evidence type="ECO:0000255" key="2"/>
<evidence type="ECO:0000269" key="3">
    <source>
    </source>
</evidence>
<evidence type="ECO:0000269" key="4">
    <source>
    </source>
</evidence>
<evidence type="ECO:0000303" key="5">
    <source>
    </source>
</evidence>
<evidence type="ECO:0000305" key="6"/>
<evidence type="ECO:0000312" key="7">
    <source>
        <dbReference type="HGNC" id="HGNC:17553"/>
    </source>
</evidence>